<keyword id="KW-1185">Reference proteome</keyword>
<gene>
    <name type="ordered locus">HI_0926</name>
</gene>
<name>Y926_HAEIN</name>
<reference key="1">
    <citation type="journal article" date="1995" name="Science">
        <title>Whole-genome random sequencing and assembly of Haemophilus influenzae Rd.</title>
        <authorList>
            <person name="Fleischmann R.D."/>
            <person name="Adams M.D."/>
            <person name="White O."/>
            <person name="Clayton R.A."/>
            <person name="Kirkness E.F."/>
            <person name="Kerlavage A.R."/>
            <person name="Bult C.J."/>
            <person name="Tomb J.-F."/>
            <person name="Dougherty B.A."/>
            <person name="Merrick J.M."/>
            <person name="McKenney K."/>
            <person name="Sutton G.G."/>
            <person name="FitzHugh W."/>
            <person name="Fields C.A."/>
            <person name="Gocayne J.D."/>
            <person name="Scott J.D."/>
            <person name="Shirley R."/>
            <person name="Liu L.-I."/>
            <person name="Glodek A."/>
            <person name="Kelley J.M."/>
            <person name="Weidman J.F."/>
            <person name="Phillips C.A."/>
            <person name="Spriggs T."/>
            <person name="Hedblom E."/>
            <person name="Cotton M.D."/>
            <person name="Utterback T.R."/>
            <person name="Hanna M.C."/>
            <person name="Nguyen D.T."/>
            <person name="Saudek D.M."/>
            <person name="Brandon R.C."/>
            <person name="Fine L.D."/>
            <person name="Fritchman J.L."/>
            <person name="Fuhrmann J.L."/>
            <person name="Geoghagen N.S.M."/>
            <person name="Gnehm C.L."/>
            <person name="McDonald L.A."/>
            <person name="Small K.V."/>
            <person name="Fraser C.M."/>
            <person name="Smith H.O."/>
            <person name="Venter J.C."/>
        </authorList>
    </citation>
    <scope>NUCLEOTIDE SEQUENCE [LARGE SCALE GENOMIC DNA]</scope>
    <source>
        <strain>ATCC 51907 / DSM 11121 / KW20 / Rd</strain>
    </source>
</reference>
<proteinExistence type="predicted"/>
<protein>
    <recommendedName>
        <fullName>Uncharacterized protein HI_0926</fullName>
    </recommendedName>
</protein>
<organism>
    <name type="scientific">Haemophilus influenzae (strain ATCC 51907 / DSM 11121 / KW20 / Rd)</name>
    <dbReference type="NCBI Taxonomy" id="71421"/>
    <lineage>
        <taxon>Bacteria</taxon>
        <taxon>Pseudomonadati</taxon>
        <taxon>Pseudomonadota</taxon>
        <taxon>Gammaproteobacteria</taxon>
        <taxon>Pasteurellales</taxon>
        <taxon>Pasteurellaceae</taxon>
        <taxon>Haemophilus</taxon>
    </lineage>
</organism>
<sequence length="86" mass="9564">MSKPILFYAETCPDTAPFVAELDRLGVDYDEVEIMTSLPNLKQFIRLRDSSAEFDNSKANGYLGIPALLLPNGDVVLDLSKLKVIF</sequence>
<dbReference type="EMBL" id="L42023">
    <property type="protein sequence ID" value="AAC22588.1"/>
    <property type="molecule type" value="Genomic_DNA"/>
</dbReference>
<dbReference type="PIR" id="D64016">
    <property type="entry name" value="D64016"/>
</dbReference>
<dbReference type="RefSeq" id="NP_439086.1">
    <property type="nucleotide sequence ID" value="NC_000907.1"/>
</dbReference>
<dbReference type="SMR" id="P44076"/>
<dbReference type="STRING" id="71421.HI_0926"/>
<dbReference type="EnsemblBacteria" id="AAC22588">
    <property type="protein sequence ID" value="AAC22588"/>
    <property type="gene ID" value="HI_0926"/>
</dbReference>
<dbReference type="KEGG" id="hin:HI_0926"/>
<dbReference type="PATRIC" id="fig|71421.8.peg.967"/>
<dbReference type="eggNOG" id="COG4545">
    <property type="taxonomic scope" value="Bacteria"/>
</dbReference>
<dbReference type="HOGENOM" id="CLU_159829_1_0_6"/>
<dbReference type="OrthoDB" id="5679012at2"/>
<dbReference type="BioCyc" id="HINF71421:G1GJ1-966-MONOMER"/>
<dbReference type="Proteomes" id="UP000000579">
    <property type="component" value="Chromosome"/>
</dbReference>
<dbReference type="Gene3D" id="3.40.30.10">
    <property type="entry name" value="Glutaredoxin"/>
    <property type="match status" value="1"/>
</dbReference>
<dbReference type="InterPro" id="IPR036249">
    <property type="entry name" value="Thioredoxin-like_sf"/>
</dbReference>
<dbReference type="InterPro" id="IPR017167">
    <property type="entry name" value="UCP037291_glutaredoxin-rel"/>
</dbReference>
<dbReference type="PIRSF" id="PIRSF037291">
    <property type="entry name" value="UCP037291_gluthr"/>
    <property type="match status" value="1"/>
</dbReference>
<dbReference type="SUPFAM" id="SSF52833">
    <property type="entry name" value="Thioredoxin-like"/>
    <property type="match status" value="1"/>
</dbReference>
<accession>P44076</accession>
<feature type="chain" id="PRO_0000077975" description="Uncharacterized protein HI_0926">
    <location>
        <begin position="1"/>
        <end position="86"/>
    </location>
</feature>